<accession>P03233</accession>
<accession>Q777B7</accession>
<name>CVC2_EBVB9</name>
<feature type="chain" id="PRO_0000116003" description="Capsid vertex component 2">
    <location>
        <begin position="1"/>
        <end position="570"/>
    </location>
</feature>
<feature type="region of interest" description="Interaction with major capsid protein/MCP" evidence="1">
    <location>
        <begin position="1"/>
        <end position="54"/>
    </location>
</feature>
<feature type="region of interest" description="Disordered" evidence="2">
    <location>
        <begin position="102"/>
        <end position="123"/>
    </location>
</feature>
<evidence type="ECO:0000255" key="1">
    <source>
        <dbReference type="HAMAP-Rule" id="MF_04025"/>
    </source>
</evidence>
<evidence type="ECO:0000256" key="2">
    <source>
        <dbReference type="SAM" id="MobiDB-lite"/>
    </source>
</evidence>
<evidence type="ECO:0000269" key="3">
    <source>
    </source>
</evidence>
<organismHost>
    <name type="scientific">Homo sapiens</name>
    <name type="common">Human</name>
    <dbReference type="NCBI Taxonomy" id="9606"/>
</organismHost>
<comment type="function">
    <text evidence="1">Capsid vertex-specific component that plays a role during viral DNA encapsidation, assuring correct genome cleavage and presumably stabilizing capsids that contain full-length viral genomes. Participates in the interaction between the capsid and the tegument through interaction with the large tegument protein/LTP.</text>
</comment>
<comment type="subunit">
    <text evidence="1">Heterodimerizes with CVC1. Interacts with major capsid protein/MCP and triplex capsid protein 1/TRX1 at the pentamer vertices. Interacts with the large tegument protein/LTP.</text>
</comment>
<comment type="subcellular location">
    <subcellularLocation>
        <location evidence="1 3">Virion</location>
    </subcellularLocation>
    <subcellularLocation>
        <location evidence="1">Host nucleus</location>
    </subcellularLocation>
</comment>
<comment type="similarity">
    <text evidence="1">Belongs to the herpesviridae CVC2 protein family.</text>
</comment>
<keyword id="KW-0002">3D-structure</keyword>
<keyword id="KW-0167">Capsid protein</keyword>
<keyword id="KW-1048">Host nucleus</keyword>
<keyword id="KW-0945">Host-virus interaction</keyword>
<keyword id="KW-1185">Reference proteome</keyword>
<keyword id="KW-0231">Viral genome packaging</keyword>
<keyword id="KW-1163">Viral penetration into host nucleus</keyword>
<keyword id="KW-1188">Viral release from host cell</keyword>
<keyword id="KW-0946">Virion</keyword>
<keyword id="KW-1160">Virus entry into host cell</keyword>
<proteinExistence type="evidence at protein level"/>
<gene>
    <name evidence="1" type="primary">CVC2</name>
    <name type="ORF">BVRF1</name>
</gene>
<sequence length="570" mass="62461">MALSGHVLIDPARLPRDTGPELMWAPSLRNSLRVSPEALELAEREAERARSERWDRCAQVLKNRLLRVELDGIMRDHLARAEEIRQDLDAVVAFSDGLESMQVRSPSTGGRSAPAPPSPSPAQPFTRLTGNAQYAVSISPTDPPLMVAGSLAQTLLGNLYGNINQWVPSFGPWYRTMSANAMQRRVFPKQLRGNLNFTNSVSLKLMTEVVAVLEGTTQDFFSDVRHLPDLQAALILSVAYLLLQGGSSHQQRPLPASREELLELGPESLEKIIADLKAKSPGGNFMILTSGNKEARQSIAPLNRQAAYPPGTFADNKIYNLFVGAGLLPTTAALNVPGAAGRDRDLVYRIANQIFGEDVPPFSSHQWNLRVGLAALEALMLVYTLCETANLAEAATRRLHLSSLLPQAMQRRKPAMASAGMPGAYPVQTLFRHGELFRFIWAHYVRPTVAADPQASISSLFPGLVLLALELKLMDGQAPSHYAINLTGQKFDTLFEIINQKLLFHDPAAMLAARTQLRLAFEDGVGVALGRPSPMLAAREILERQFSASDDYDRLYFLTLGYLASPVAPS</sequence>
<dbReference type="EMBL" id="V01555">
    <property type="protein sequence ID" value="CAA24800.1"/>
    <property type="molecule type" value="Genomic_DNA"/>
</dbReference>
<dbReference type="EMBL" id="AJ507799">
    <property type="protein sequence ID" value="CAD53453.1"/>
    <property type="molecule type" value="Genomic_DNA"/>
</dbReference>
<dbReference type="PIR" id="A03797">
    <property type="entry name" value="QQBE2R"/>
</dbReference>
<dbReference type="RefSeq" id="YP_401703.1">
    <property type="nucleotide sequence ID" value="NC_007605.1"/>
</dbReference>
<dbReference type="PDB" id="6W2D">
    <property type="method" value="EM"/>
    <property type="resolution" value="4.00 A"/>
    <property type="chains" value="w/x=1-570"/>
</dbReference>
<dbReference type="PDB" id="6W2E">
    <property type="method" value="EM"/>
    <property type="resolution" value="4.40 A"/>
    <property type="chains" value="w/x=1-570"/>
</dbReference>
<dbReference type="PDB" id="7BQX">
    <property type="method" value="EM"/>
    <property type="resolution" value="4.20 A"/>
    <property type="chains" value="G/K=1-570"/>
</dbReference>
<dbReference type="PDB" id="7BR7">
    <property type="method" value="EM"/>
    <property type="resolution" value="4.30 A"/>
    <property type="chains" value="G/K=1-570"/>
</dbReference>
<dbReference type="PDBsum" id="6W2D"/>
<dbReference type="PDBsum" id="6W2E"/>
<dbReference type="PDBsum" id="7BQX"/>
<dbReference type="PDBsum" id="7BR7"/>
<dbReference type="EMDB" id="EMD-21525"/>
<dbReference type="EMDB" id="EMD-21526"/>
<dbReference type="EMDB" id="EMD-30157"/>
<dbReference type="EMDB" id="EMD-30158"/>
<dbReference type="SMR" id="P03233"/>
<dbReference type="DNASU" id="3783732"/>
<dbReference type="GeneID" id="3783732"/>
<dbReference type="KEGG" id="vg:3783732"/>
<dbReference type="Proteomes" id="UP000153037">
    <property type="component" value="Segment"/>
</dbReference>
<dbReference type="GO" id="GO:0043657">
    <property type="term" value="C:host cell"/>
    <property type="evidence" value="ECO:0007669"/>
    <property type="project" value="GOC"/>
</dbReference>
<dbReference type="GO" id="GO:0042025">
    <property type="term" value="C:host cell nucleus"/>
    <property type="evidence" value="ECO:0007669"/>
    <property type="project" value="UniProtKB-SubCell"/>
</dbReference>
<dbReference type="GO" id="GO:0019028">
    <property type="term" value="C:viral capsid"/>
    <property type="evidence" value="ECO:0007669"/>
    <property type="project" value="UniProtKB-KW"/>
</dbReference>
<dbReference type="GO" id="GO:0046718">
    <property type="term" value="P:symbiont entry into host cell"/>
    <property type="evidence" value="ECO:0007669"/>
    <property type="project" value="UniProtKB-KW"/>
</dbReference>
<dbReference type="GO" id="GO:0019072">
    <property type="term" value="P:viral genome packaging"/>
    <property type="evidence" value="ECO:0007669"/>
    <property type="project" value="InterPro"/>
</dbReference>
<dbReference type="GO" id="GO:0075732">
    <property type="term" value="P:viral penetration into host nucleus"/>
    <property type="evidence" value="ECO:0007669"/>
    <property type="project" value="UniProtKB-KW"/>
</dbReference>
<dbReference type="HAMAP" id="MF_04025">
    <property type="entry name" value="HSV_CVC2"/>
    <property type="match status" value="1"/>
</dbReference>
<dbReference type="InterPro" id="IPR002493">
    <property type="entry name" value="Herpes_UL25"/>
</dbReference>
<dbReference type="Pfam" id="PF01499">
    <property type="entry name" value="Herpes_UL25"/>
    <property type="match status" value="1"/>
</dbReference>
<organism>
    <name type="scientific">Epstein-Barr virus (strain B95-8)</name>
    <name type="common">HHV-4</name>
    <name type="synonym">Human herpesvirus 4</name>
    <dbReference type="NCBI Taxonomy" id="10377"/>
    <lineage>
        <taxon>Viruses</taxon>
        <taxon>Duplodnaviria</taxon>
        <taxon>Heunggongvirae</taxon>
        <taxon>Peploviricota</taxon>
        <taxon>Herviviricetes</taxon>
        <taxon>Herpesvirales</taxon>
        <taxon>Orthoherpesviridae</taxon>
        <taxon>Gammaherpesvirinae</taxon>
        <taxon>Lymphocryptovirus</taxon>
        <taxon>Lymphocryptovirus humangamma4</taxon>
        <taxon>Epstein-Barr virus (strain GD1)</taxon>
    </lineage>
</organism>
<reference key="1">
    <citation type="journal article" date="1983" name="Mol. Biol. Med.">
        <title>Sequence analysis of the 17,166 base-pair EcoRI fragment C of B95-8 Epstein-Barr virus.</title>
        <authorList>
            <person name="Bankier A.T."/>
            <person name="Deininger P.L."/>
            <person name="Farrell P.J."/>
            <person name="Barrell B.G."/>
        </authorList>
    </citation>
    <scope>NUCLEOTIDE SEQUENCE [GENOMIC DNA]</scope>
</reference>
<reference key="2">
    <citation type="journal article" date="1984" name="Nature">
        <title>DNA sequence and expression of the B95-8 Epstein-Barr virus genome.</title>
        <authorList>
            <person name="Baer R."/>
            <person name="Bankier A.T."/>
            <person name="Biggin M.D."/>
            <person name="Deininger P.L."/>
            <person name="Farrell P.J."/>
            <person name="Gibson T.J."/>
            <person name="Hatfull G."/>
            <person name="Hudson G.S."/>
            <person name="Satchwell S.C."/>
            <person name="Seguin C."/>
            <person name="Tuffnell P.S."/>
            <person name="Barrell B.G."/>
        </authorList>
    </citation>
    <scope>NUCLEOTIDE SEQUENCE [LARGE SCALE GENOMIC DNA]</scope>
</reference>
<reference key="3">
    <citation type="journal article" date="2003" name="Virology">
        <title>Updated Epstein-Barr virus (EBV) DNA sequence and analysis of a promoter for the BART (CST, BARF0) RNAs of EBV.</title>
        <authorList>
            <person name="de Jesus O."/>
            <person name="Smith P.R."/>
            <person name="Spender L.C."/>
            <person name="Elgueta Karstegl C."/>
            <person name="Niller H.H."/>
            <person name="Huang D."/>
            <person name="Farrell P.J."/>
        </authorList>
    </citation>
    <scope>GENOME REANNOTATION</scope>
</reference>
<reference key="4">
    <citation type="journal article" date="2004" name="Proc. Natl. Acad. Sci. U.S.A.">
        <title>Proteins of purified Epstein-Barr virus.</title>
        <authorList>
            <person name="Johannsen E."/>
            <person name="Luftig M."/>
            <person name="Chase M.R."/>
            <person name="Weicksel S."/>
            <person name="Cahir-McFarland E."/>
            <person name="Illanes D."/>
            <person name="Sarracino D."/>
            <person name="Kieff E."/>
        </authorList>
    </citation>
    <scope>IDENTIFICATION</scope>
    <scope>SUBCELLULAR LOCATION</scope>
</reference>
<protein>
    <recommendedName>
        <fullName evidence="1">Capsid vertex component 2</fullName>
    </recommendedName>
</protein>